<protein>
    <recommendedName>
        <fullName>Apolipoprotein A-I</fullName>
        <shortName>Apo-AI</shortName>
        <shortName>ApoA-I</shortName>
    </recommendedName>
    <alternativeName>
        <fullName>Apolipoprotein A1</fullName>
    </alternativeName>
    <component>
        <recommendedName>
            <fullName>Proapolipoprotein A-I</fullName>
            <shortName>ProapoA-I</shortName>
        </recommendedName>
    </component>
    <component>
        <recommendedName>
            <fullName>Truncated apolipoprotein A-I</fullName>
        </recommendedName>
    </component>
</protein>
<accession>P02648</accession>
<organism>
    <name type="scientific">Canis lupus familiaris</name>
    <name type="common">Dog</name>
    <name type="synonym">Canis familiaris</name>
    <dbReference type="NCBI Taxonomy" id="9615"/>
    <lineage>
        <taxon>Eukaryota</taxon>
        <taxon>Metazoa</taxon>
        <taxon>Chordata</taxon>
        <taxon>Craniata</taxon>
        <taxon>Vertebrata</taxon>
        <taxon>Euteleostomi</taxon>
        <taxon>Mammalia</taxon>
        <taxon>Eutheria</taxon>
        <taxon>Laurasiatheria</taxon>
        <taxon>Carnivora</taxon>
        <taxon>Caniformia</taxon>
        <taxon>Canidae</taxon>
        <taxon>Canis</taxon>
    </lineage>
</organism>
<feature type="signal peptide" evidence="5">
    <location>
        <begin position="1"/>
        <end position="18"/>
    </location>
</feature>
<feature type="chain" id="PRO_0000425320" description="Proapolipoprotein A-I">
    <location>
        <begin position="19"/>
        <end position="266"/>
    </location>
</feature>
<feature type="chain" id="PRO_0000001937" description="Apolipoprotein A-I">
    <location>
        <begin position="25"/>
        <end position="266"/>
    </location>
</feature>
<feature type="chain" id="PRO_0000416572" description="Truncated apolipoprotein A-I" evidence="1">
    <location>
        <begin position="25"/>
        <end position="265"/>
    </location>
</feature>
<feature type="repeat" description="1">
    <location>
        <begin position="67"/>
        <end position="88"/>
    </location>
</feature>
<feature type="repeat" description="2">
    <location>
        <begin position="89"/>
        <end position="110"/>
    </location>
</feature>
<feature type="repeat" description="3; half-length">
    <location>
        <begin position="111"/>
        <end position="121"/>
    </location>
</feature>
<feature type="repeat" description="4">
    <location>
        <begin position="122"/>
        <end position="143"/>
    </location>
</feature>
<feature type="repeat" description="5">
    <location>
        <begin position="144"/>
        <end position="165"/>
    </location>
</feature>
<feature type="repeat" description="6">
    <location>
        <begin position="166"/>
        <end position="187"/>
    </location>
</feature>
<feature type="repeat" description="7">
    <location>
        <begin position="188"/>
        <end position="209"/>
    </location>
</feature>
<feature type="repeat" description="8">
    <location>
        <begin position="210"/>
        <end position="231"/>
    </location>
</feature>
<feature type="repeat" description="9; half-length">
    <location>
        <begin position="232"/>
        <end position="242"/>
    </location>
</feature>
<feature type="repeat" description="10">
    <location>
        <begin position="243"/>
        <end position="266"/>
    </location>
</feature>
<feature type="region of interest" description="10 X approximate tandem repeats">
    <location>
        <begin position="67"/>
        <end position="266"/>
    </location>
</feature>
<feature type="modified residue" description="Methionine sulfoxide" evidence="5">
    <location>
        <position position="109"/>
    </location>
</feature>
<feature type="sequence conflict" description="In Ref. 2; AA sequence and 3; AA sequence." evidence="6" ref="2 3">
    <original>A</original>
    <variation>G</variation>
    <location>
        <position position="168"/>
    </location>
</feature>
<feature type="sequence conflict" description="In Ref. 2; AA sequence and 3; AA sequence." evidence="6" ref="2 3">
    <original>E</original>
    <variation>Q</variation>
    <location>
        <position position="202"/>
    </location>
</feature>
<feature type="sequence conflict" description="In Ref. 3; AA sequence." evidence="6" ref="3">
    <original>E</original>
    <variation>Q</variation>
    <location>
        <position position="235"/>
    </location>
</feature>
<feature type="sequence conflict" description="In Ref. 4; AA sequence." evidence="6" ref="4">
    <original>NAQ</original>
    <variation>A</variation>
    <location>
        <begin position="264"/>
        <end position="266"/>
    </location>
</feature>
<dbReference type="PIR" id="A60940">
    <property type="entry name" value="LPDGA1"/>
</dbReference>
<dbReference type="SMR" id="P02648"/>
<dbReference type="FunCoup" id="P02648">
    <property type="interactions" value="4"/>
</dbReference>
<dbReference type="STRING" id="9615.ENSCAFP00000019630"/>
<dbReference type="PaxDb" id="9612-ENSCAFP00000019630"/>
<dbReference type="eggNOG" id="ENOG502S1XQ">
    <property type="taxonomic scope" value="Eukaryota"/>
</dbReference>
<dbReference type="InParanoid" id="P02648"/>
<dbReference type="OrthoDB" id="8727817at2759"/>
<dbReference type="Proteomes" id="UP000002254">
    <property type="component" value="Unplaced"/>
</dbReference>
<dbReference type="Proteomes" id="UP000694429">
    <property type="component" value="Unplaced"/>
</dbReference>
<dbReference type="Proteomes" id="UP000694542">
    <property type="component" value="Unplaced"/>
</dbReference>
<dbReference type="Proteomes" id="UP000805418">
    <property type="component" value="Unplaced"/>
</dbReference>
<dbReference type="GO" id="GO:0042627">
    <property type="term" value="C:chylomicron"/>
    <property type="evidence" value="ECO:0000318"/>
    <property type="project" value="GO_Central"/>
</dbReference>
<dbReference type="GO" id="GO:1903561">
    <property type="term" value="C:extracellular vesicle"/>
    <property type="evidence" value="ECO:0000318"/>
    <property type="project" value="GO_Central"/>
</dbReference>
<dbReference type="GO" id="GO:0034364">
    <property type="term" value="C:high-density lipoprotein particle"/>
    <property type="evidence" value="ECO:0000318"/>
    <property type="project" value="GO_Central"/>
</dbReference>
<dbReference type="GO" id="GO:0034362">
    <property type="term" value="C:low-density lipoprotein particle"/>
    <property type="evidence" value="ECO:0000318"/>
    <property type="project" value="GO_Central"/>
</dbReference>
<dbReference type="GO" id="GO:0034361">
    <property type="term" value="C:very-low-density lipoprotein particle"/>
    <property type="evidence" value="ECO:0000318"/>
    <property type="project" value="GO_Central"/>
</dbReference>
<dbReference type="GO" id="GO:0120020">
    <property type="term" value="F:cholesterol transfer activity"/>
    <property type="evidence" value="ECO:0000318"/>
    <property type="project" value="GO_Central"/>
</dbReference>
<dbReference type="GO" id="GO:0060228">
    <property type="term" value="F:phosphatidylcholine-sterol O-acyltransferase activator activity"/>
    <property type="evidence" value="ECO:0000318"/>
    <property type="project" value="GO_Central"/>
</dbReference>
<dbReference type="GO" id="GO:0005543">
    <property type="term" value="F:phospholipid binding"/>
    <property type="evidence" value="ECO:0000318"/>
    <property type="project" value="GO_Central"/>
</dbReference>
<dbReference type="GO" id="GO:0042803">
    <property type="term" value="F:protein homodimerization activity"/>
    <property type="evidence" value="ECO:0000250"/>
    <property type="project" value="UniProtKB"/>
</dbReference>
<dbReference type="GO" id="GO:0055090">
    <property type="term" value="P:acylglycerol homeostasis"/>
    <property type="evidence" value="ECO:0000318"/>
    <property type="project" value="GO_Central"/>
</dbReference>
<dbReference type="GO" id="GO:0033344">
    <property type="term" value="P:cholesterol efflux"/>
    <property type="evidence" value="ECO:0000318"/>
    <property type="project" value="GO_Central"/>
</dbReference>
<dbReference type="GO" id="GO:0008203">
    <property type="term" value="P:cholesterol metabolic process"/>
    <property type="evidence" value="ECO:0000318"/>
    <property type="project" value="GO_Central"/>
</dbReference>
<dbReference type="GO" id="GO:0042157">
    <property type="term" value="P:lipoprotein metabolic process"/>
    <property type="evidence" value="ECO:0007669"/>
    <property type="project" value="InterPro"/>
</dbReference>
<dbReference type="GO" id="GO:0018206">
    <property type="term" value="P:peptidyl-methionine modification"/>
    <property type="evidence" value="ECO:0000250"/>
    <property type="project" value="UniProtKB"/>
</dbReference>
<dbReference type="GO" id="GO:0033700">
    <property type="term" value="P:phospholipid efflux"/>
    <property type="evidence" value="ECO:0000318"/>
    <property type="project" value="GO_Central"/>
</dbReference>
<dbReference type="GO" id="GO:0010875">
    <property type="term" value="P:positive regulation of cholesterol efflux"/>
    <property type="evidence" value="ECO:0000250"/>
    <property type="project" value="UniProtKB"/>
</dbReference>
<dbReference type="GO" id="GO:0050766">
    <property type="term" value="P:positive regulation of phagocytosis"/>
    <property type="evidence" value="ECO:0000250"/>
    <property type="project" value="UniProtKB"/>
</dbReference>
<dbReference type="GO" id="GO:1902995">
    <property type="term" value="P:positive regulation of phospholipid efflux"/>
    <property type="evidence" value="ECO:0000250"/>
    <property type="project" value="UniProtKB"/>
</dbReference>
<dbReference type="GO" id="GO:0018158">
    <property type="term" value="P:protein oxidation"/>
    <property type="evidence" value="ECO:0000250"/>
    <property type="project" value="UniProtKB"/>
</dbReference>
<dbReference type="GO" id="GO:0050821">
    <property type="term" value="P:protein stabilization"/>
    <property type="evidence" value="ECO:0000250"/>
    <property type="project" value="UniProtKB"/>
</dbReference>
<dbReference type="FunFam" id="1.20.120.20:FF:000001">
    <property type="entry name" value="Apolipoprotein A-I"/>
    <property type="match status" value="1"/>
</dbReference>
<dbReference type="FunFam" id="1.20.5.20:FF:000001">
    <property type="entry name" value="apolipoprotein A-I"/>
    <property type="match status" value="1"/>
</dbReference>
<dbReference type="Gene3D" id="1.20.5.20">
    <property type="match status" value="1"/>
</dbReference>
<dbReference type="Gene3D" id="6.10.140.380">
    <property type="match status" value="1"/>
</dbReference>
<dbReference type="Gene3D" id="1.20.120.20">
    <property type="entry name" value="Apolipoprotein"/>
    <property type="match status" value="1"/>
</dbReference>
<dbReference type="InterPro" id="IPR000074">
    <property type="entry name" value="ApoA_E"/>
</dbReference>
<dbReference type="InterPro" id="IPR050163">
    <property type="entry name" value="Apolipoprotein_A1/A4/E"/>
</dbReference>
<dbReference type="PANTHER" id="PTHR18976">
    <property type="entry name" value="APOLIPOPROTEIN"/>
    <property type="match status" value="1"/>
</dbReference>
<dbReference type="PANTHER" id="PTHR18976:SF11">
    <property type="entry name" value="APOLIPOPROTEIN A-I"/>
    <property type="match status" value="1"/>
</dbReference>
<dbReference type="Pfam" id="PF01442">
    <property type="entry name" value="Apolipoprotein"/>
    <property type="match status" value="1"/>
</dbReference>
<dbReference type="SUPFAM" id="SSF58113">
    <property type="entry name" value="Apolipoprotein A-I"/>
    <property type="match status" value="1"/>
</dbReference>
<sequence>MKAALLTLAVLFLTGSQARHFWQQDEPQSPWDRVKDLATVYVDAVKDSGRDYVAQFEASALGKQLNLKLLDNWDSLSSTVTKLREQIGPVTQEFWDNLEKETEVLRQEMSKDLEEVKQKVQPYLDDFQKKWQEEVELYRQKVAPLGSELREGARQKLQELQEKLSPLAEELRDRARTHVDALRAQLAPYSDDLRERLAARLEALKEGGGASLAEYHARASEQLSALGEKARPALEDLRQGLLPVLESFKVSLLAAIDEATKKLNAQ</sequence>
<name>APOA1_CANLF</name>
<gene>
    <name type="primary">APOA1</name>
</gene>
<keyword id="KW-0153">Cholesterol metabolism</keyword>
<keyword id="KW-0903">Direct protein sequencing</keyword>
<keyword id="KW-0325">Glycoprotein</keyword>
<keyword id="KW-0345">HDL</keyword>
<keyword id="KW-0443">Lipid metabolism</keyword>
<keyword id="KW-0445">Lipid transport</keyword>
<keyword id="KW-0449">Lipoprotein</keyword>
<keyword id="KW-0558">Oxidation</keyword>
<keyword id="KW-0564">Palmitate</keyword>
<keyword id="KW-0597">Phosphoprotein</keyword>
<keyword id="KW-1185">Reference proteome</keyword>
<keyword id="KW-0677">Repeat</keyword>
<keyword id="KW-0964">Secreted</keyword>
<keyword id="KW-0732">Signal</keyword>
<keyword id="KW-0753">Steroid metabolism</keyword>
<keyword id="KW-1207">Sterol metabolism</keyword>
<keyword id="KW-0813">Transport</keyword>
<evidence type="ECO:0000250" key="1"/>
<evidence type="ECO:0000250" key="2">
    <source>
        <dbReference type="UniProtKB" id="G5BQH5"/>
    </source>
</evidence>
<evidence type="ECO:0000250" key="3">
    <source>
        <dbReference type="UniProtKB" id="P02647"/>
    </source>
</evidence>
<evidence type="ECO:0000250" key="4">
    <source>
        <dbReference type="UniProtKB" id="P04639"/>
    </source>
</evidence>
<evidence type="ECO:0000269" key="5">
    <source>
    </source>
</evidence>
<evidence type="ECO:0000305" key="6"/>
<comment type="function">
    <text>Participates in the reverse transport of cholesterol from tissues to the liver for excretion by promoting cholesterol efflux from tissues and by acting as a cofactor for the lecithin cholesterol acyltransferase (LCAT). As part of the SPAP complex, activates spermatozoa motility.</text>
</comment>
<comment type="subunit">
    <text evidence="2 3 4">Homodimer (By similarity). Interacts with APOA1BP and CLU. Component of a sperm activating protein complex (SPAP), consisting of APOA1, an immunoglobulin heavy chain, an immunoglobulin light chain and albumin. Interacts with NDRG1. Interacts with SCGB3A2 (By similarity). Interacts with NAXE and YJEFN3 (By similarity).</text>
</comment>
<comment type="subcellular location">
    <subcellularLocation>
        <location>Secreted</location>
    </subcellularLocation>
</comment>
<comment type="tissue specificity">
    <text>Major protein of plasma HDL, also found in chylomicrons. Synthesized in the liver and small intestine.</text>
</comment>
<comment type="PTM">
    <text evidence="5">Palmitoylated.</text>
</comment>
<comment type="PTM">
    <text evidence="5">Glycosylated.</text>
</comment>
<comment type="PTM">
    <text evidence="1">Phosphorylation sites are present in the extracellular medium.</text>
</comment>
<comment type="mass spectrometry">
    <molecule>Apolipoprotein A-I</molecule>
</comment>
<comment type="mass spectrometry">
    <molecule>Proapolipoprotein A-I</molecule>
</comment>
<comment type="mass spectrometry">
    <molecule>Apolipoprotein A-I</molecule>
    <text>Glycosylated ApoA-I.</text>
</comment>
<comment type="mass spectrometry">
    <molecule>Apolipoprotein A-I</molecule>
    <text>Stearoylated ApoA-I.</text>
</comment>
<comment type="mass spectrometry">
    <molecule>Apolipoprotein A-I</molecule>
    <text>Palmitoylated ApoA-I.</text>
</comment>
<comment type="similarity">
    <text evidence="6">Belongs to the apolipoprotein A1/A4/E family.</text>
</comment>
<reference key="1">
    <citation type="journal article" date="1989" name="J. Lipid Res.">
        <title>Structure and expression of dog apolipoprotein A-I, E, and C-I mRNAs: implications for the evolution and functional constraints of apolipoprotein structure.</title>
        <authorList>
            <person name="Luo C.-C."/>
            <person name="Li W.-H."/>
            <person name="Chan L."/>
        </authorList>
    </citation>
    <scope>NUCLEOTIDE SEQUENCE [MRNA]</scope>
    <source>
        <tissue>Liver</tissue>
    </source>
</reference>
<reference key="2">
    <citation type="journal article" date="2008" name="Comp. Biochem. Physiol.">
        <title>Mass spectral analysis of the apolipoproteins on dog (Canis lupus familiaris) high density lipoproteins. Detection of apolipoprotein A-II.</title>
        <authorList>
            <person name="Puppione D.L."/>
            <person name="Bassilian S."/>
            <person name="Souda P."/>
            <person name="MacDonald M.H."/>
            <person name="Halgand F."/>
            <person name="Hagland F."/>
            <person name="Whitelegge J.P."/>
        </authorList>
    </citation>
    <scope>PROTEIN SEQUENCE OF 19-139; 142-150; 155-172; 184-196 AND 201-266</scope>
    <scope>MASS SPECTROMETRY</scope>
    <scope>OXIDATION AT MET-109</scope>
    <scope>GLYCOSYLATION</scope>
    <scope>PALMITOYLATION</scope>
    <source>
        <tissue>Plasma</tissue>
    </source>
</reference>
<reference key="3">
    <citation type="journal article" date="1982" name="J. Biol. Chem.">
        <title>The covalent structure of apolipoprotein A-I from canine high density lipoproteins.</title>
        <authorList>
            <person name="Chung H."/>
            <person name="Randolph A."/>
            <person name="Reardon I."/>
            <person name="Heinrikson R.L."/>
        </authorList>
    </citation>
    <scope>PROTEIN SEQUENCE OF 25-266</scope>
</reference>
<reference key="4">
    <citation type="journal article" date="1976" name="FEBS Lett.">
        <title>The amino- and carboxyl-terminal sequences of canine apolipoprotein A-i.</title>
        <authorList>
            <person name="Nakai T."/>
            <person name="Whayne T.F."/>
            <person name="Tang J."/>
        </authorList>
    </citation>
    <scope>PROTEIN SEQUENCE OF 25-57 AND 262-265</scope>
</reference>
<reference key="5">
    <citation type="journal article" date="1997" name="Electrophoresis">
        <title>HSC-2DPAGE and the two-dimensional gel electrophoresis database of dog heart proteins.</title>
        <authorList>
            <person name="Dunn M.J."/>
            <person name="Corbett J.M."/>
            <person name="Wheeler C.H."/>
        </authorList>
    </citation>
    <scope>PROTEIN SEQUENCE OF 25-37</scope>
    <source>
        <tissue>Heart</tissue>
    </source>
</reference>
<proteinExistence type="evidence at protein level"/>